<proteinExistence type="inferred from homology"/>
<gene>
    <name evidence="1" type="primary">purH</name>
    <name type="ordered locus">NGO_1466</name>
</gene>
<protein>
    <recommendedName>
        <fullName evidence="1">Bifunctional purine biosynthesis protein PurH</fullName>
    </recommendedName>
    <domain>
        <recommendedName>
            <fullName evidence="1">Phosphoribosylaminoimidazolecarboxamide formyltransferase</fullName>
            <ecNumber evidence="1">2.1.2.3</ecNumber>
        </recommendedName>
        <alternativeName>
            <fullName evidence="1">AICAR transformylase</fullName>
        </alternativeName>
    </domain>
    <domain>
        <recommendedName>
            <fullName evidence="1">IMP cyclohydrolase</fullName>
            <ecNumber evidence="1">3.5.4.10</ecNumber>
        </recommendedName>
        <alternativeName>
            <fullName evidence="1">ATIC</fullName>
        </alternativeName>
        <alternativeName>
            <fullName evidence="1">IMP synthase</fullName>
        </alternativeName>
        <alternativeName>
            <fullName evidence="1">Inosinicase</fullName>
        </alternativeName>
    </domain>
</protein>
<evidence type="ECO:0000255" key="1">
    <source>
        <dbReference type="HAMAP-Rule" id="MF_00139"/>
    </source>
</evidence>
<evidence type="ECO:0000255" key="2">
    <source>
        <dbReference type="PROSITE-ProRule" id="PRU01202"/>
    </source>
</evidence>
<feature type="chain" id="PRO_1000018917" description="Bifunctional purine biosynthesis protein PurH">
    <location>
        <begin position="1"/>
        <end position="526"/>
    </location>
</feature>
<feature type="domain" description="MGS-like" evidence="2">
    <location>
        <begin position="1"/>
        <end position="147"/>
    </location>
</feature>
<comment type="catalytic activity">
    <reaction evidence="1">
        <text>(6R)-10-formyltetrahydrofolate + 5-amino-1-(5-phospho-beta-D-ribosyl)imidazole-4-carboxamide = 5-formamido-1-(5-phospho-D-ribosyl)imidazole-4-carboxamide + (6S)-5,6,7,8-tetrahydrofolate</text>
        <dbReference type="Rhea" id="RHEA:22192"/>
        <dbReference type="ChEBI" id="CHEBI:57453"/>
        <dbReference type="ChEBI" id="CHEBI:58467"/>
        <dbReference type="ChEBI" id="CHEBI:58475"/>
        <dbReference type="ChEBI" id="CHEBI:195366"/>
        <dbReference type="EC" id="2.1.2.3"/>
    </reaction>
</comment>
<comment type="catalytic activity">
    <reaction evidence="1">
        <text>IMP + H2O = 5-formamido-1-(5-phospho-D-ribosyl)imidazole-4-carboxamide</text>
        <dbReference type="Rhea" id="RHEA:18445"/>
        <dbReference type="ChEBI" id="CHEBI:15377"/>
        <dbReference type="ChEBI" id="CHEBI:58053"/>
        <dbReference type="ChEBI" id="CHEBI:58467"/>
        <dbReference type="EC" id="3.5.4.10"/>
    </reaction>
</comment>
<comment type="pathway">
    <text evidence="1">Purine metabolism; IMP biosynthesis via de novo pathway; 5-formamido-1-(5-phospho-D-ribosyl)imidazole-4-carboxamide from 5-amino-1-(5-phospho-D-ribosyl)imidazole-4-carboxamide (10-formyl THF route): step 1/1.</text>
</comment>
<comment type="pathway">
    <text evidence="1">Purine metabolism; IMP biosynthesis via de novo pathway; IMP from 5-formamido-1-(5-phospho-D-ribosyl)imidazole-4-carboxamide: step 1/1.</text>
</comment>
<comment type="domain">
    <text evidence="1">The IMP cyclohydrolase activity resides in the N-terminal region.</text>
</comment>
<comment type="similarity">
    <text evidence="1">Belongs to the PurH family.</text>
</comment>
<accession>Q5F6T1</accession>
<reference key="1">
    <citation type="submission" date="2003-03" db="EMBL/GenBank/DDBJ databases">
        <title>The complete genome sequence of Neisseria gonorrhoeae.</title>
        <authorList>
            <person name="Lewis L.A."/>
            <person name="Gillaspy A.F."/>
            <person name="McLaughlin R.E."/>
            <person name="Gipson M."/>
            <person name="Ducey T.F."/>
            <person name="Ownbey T."/>
            <person name="Hartman K."/>
            <person name="Nydick C."/>
            <person name="Carson M.B."/>
            <person name="Vaughn J."/>
            <person name="Thomson C."/>
            <person name="Song L."/>
            <person name="Lin S."/>
            <person name="Yuan X."/>
            <person name="Najar F."/>
            <person name="Zhan M."/>
            <person name="Ren Q."/>
            <person name="Zhu H."/>
            <person name="Qi S."/>
            <person name="Kenton S.M."/>
            <person name="Lai H."/>
            <person name="White J.D."/>
            <person name="Clifton S."/>
            <person name="Roe B.A."/>
            <person name="Dyer D.W."/>
        </authorList>
    </citation>
    <scope>NUCLEOTIDE SEQUENCE [LARGE SCALE GENOMIC DNA]</scope>
    <source>
        <strain>ATCC 700825 / FA 1090</strain>
    </source>
</reference>
<name>PUR9_NEIG1</name>
<dbReference type="EC" id="2.1.2.3" evidence="1"/>
<dbReference type="EC" id="3.5.4.10" evidence="1"/>
<dbReference type="EMBL" id="AE004969">
    <property type="protein sequence ID" value="AAW90106.1"/>
    <property type="molecule type" value="Genomic_DNA"/>
</dbReference>
<dbReference type="RefSeq" id="WP_010358883.1">
    <property type="nucleotide sequence ID" value="NC_002946.2"/>
</dbReference>
<dbReference type="RefSeq" id="YP_208518.1">
    <property type="nucleotide sequence ID" value="NC_002946.2"/>
</dbReference>
<dbReference type="SMR" id="Q5F6T1"/>
<dbReference type="STRING" id="242231.NGO_1466"/>
<dbReference type="KEGG" id="ngo:NGO_1466"/>
<dbReference type="PATRIC" id="fig|242231.10.peg.1731"/>
<dbReference type="HOGENOM" id="CLU_016316_5_2_4"/>
<dbReference type="UniPathway" id="UPA00074">
    <property type="reaction ID" value="UER00133"/>
</dbReference>
<dbReference type="UniPathway" id="UPA00074">
    <property type="reaction ID" value="UER00135"/>
</dbReference>
<dbReference type="Proteomes" id="UP000000535">
    <property type="component" value="Chromosome"/>
</dbReference>
<dbReference type="GO" id="GO:0005829">
    <property type="term" value="C:cytosol"/>
    <property type="evidence" value="ECO:0007669"/>
    <property type="project" value="TreeGrafter"/>
</dbReference>
<dbReference type="GO" id="GO:0003937">
    <property type="term" value="F:IMP cyclohydrolase activity"/>
    <property type="evidence" value="ECO:0007669"/>
    <property type="project" value="UniProtKB-UniRule"/>
</dbReference>
<dbReference type="GO" id="GO:0004643">
    <property type="term" value="F:phosphoribosylaminoimidazolecarboxamide formyltransferase activity"/>
    <property type="evidence" value="ECO:0007669"/>
    <property type="project" value="UniProtKB-UniRule"/>
</dbReference>
<dbReference type="GO" id="GO:0006189">
    <property type="term" value="P:'de novo' IMP biosynthetic process"/>
    <property type="evidence" value="ECO:0007669"/>
    <property type="project" value="UniProtKB-UniRule"/>
</dbReference>
<dbReference type="CDD" id="cd01421">
    <property type="entry name" value="IMPCH"/>
    <property type="match status" value="1"/>
</dbReference>
<dbReference type="FunFam" id="3.40.140.20:FF:000001">
    <property type="entry name" value="Bifunctional purine biosynthesis protein PurH"/>
    <property type="match status" value="1"/>
</dbReference>
<dbReference type="FunFam" id="3.40.140.20:FF:000002">
    <property type="entry name" value="Bifunctional purine biosynthesis protein PurH"/>
    <property type="match status" value="1"/>
</dbReference>
<dbReference type="FunFam" id="3.40.50.1380:FF:000001">
    <property type="entry name" value="Bifunctional purine biosynthesis protein PurH"/>
    <property type="match status" value="1"/>
</dbReference>
<dbReference type="Gene3D" id="3.40.140.20">
    <property type="match status" value="2"/>
</dbReference>
<dbReference type="Gene3D" id="3.40.50.1380">
    <property type="entry name" value="Methylglyoxal synthase-like domain"/>
    <property type="match status" value="1"/>
</dbReference>
<dbReference type="HAMAP" id="MF_00139">
    <property type="entry name" value="PurH"/>
    <property type="match status" value="1"/>
</dbReference>
<dbReference type="InterPro" id="IPR024051">
    <property type="entry name" value="AICAR_Tfase_dup_dom_sf"/>
</dbReference>
<dbReference type="InterPro" id="IPR016193">
    <property type="entry name" value="Cytidine_deaminase-like"/>
</dbReference>
<dbReference type="InterPro" id="IPR011607">
    <property type="entry name" value="MGS-like_dom"/>
</dbReference>
<dbReference type="InterPro" id="IPR036914">
    <property type="entry name" value="MGS-like_dom_sf"/>
</dbReference>
<dbReference type="InterPro" id="IPR002695">
    <property type="entry name" value="PurH-like"/>
</dbReference>
<dbReference type="NCBIfam" id="NF002049">
    <property type="entry name" value="PRK00881.1"/>
    <property type="match status" value="1"/>
</dbReference>
<dbReference type="NCBIfam" id="TIGR00355">
    <property type="entry name" value="purH"/>
    <property type="match status" value="1"/>
</dbReference>
<dbReference type="PANTHER" id="PTHR11692:SF0">
    <property type="entry name" value="BIFUNCTIONAL PURINE BIOSYNTHESIS PROTEIN ATIC"/>
    <property type="match status" value="1"/>
</dbReference>
<dbReference type="PANTHER" id="PTHR11692">
    <property type="entry name" value="BIFUNCTIONAL PURINE BIOSYNTHESIS PROTEIN PURH"/>
    <property type="match status" value="1"/>
</dbReference>
<dbReference type="Pfam" id="PF01808">
    <property type="entry name" value="AICARFT_IMPCHas"/>
    <property type="match status" value="1"/>
</dbReference>
<dbReference type="Pfam" id="PF02142">
    <property type="entry name" value="MGS"/>
    <property type="match status" value="1"/>
</dbReference>
<dbReference type="PIRSF" id="PIRSF000414">
    <property type="entry name" value="AICARFT_IMPCHas"/>
    <property type="match status" value="1"/>
</dbReference>
<dbReference type="SMART" id="SM00798">
    <property type="entry name" value="AICARFT_IMPCHas"/>
    <property type="match status" value="1"/>
</dbReference>
<dbReference type="SMART" id="SM00851">
    <property type="entry name" value="MGS"/>
    <property type="match status" value="1"/>
</dbReference>
<dbReference type="SUPFAM" id="SSF53927">
    <property type="entry name" value="Cytidine deaminase-like"/>
    <property type="match status" value="1"/>
</dbReference>
<dbReference type="SUPFAM" id="SSF52335">
    <property type="entry name" value="Methylglyoxal synthase-like"/>
    <property type="match status" value="1"/>
</dbReference>
<dbReference type="PROSITE" id="PS51855">
    <property type="entry name" value="MGS"/>
    <property type="match status" value="1"/>
</dbReference>
<keyword id="KW-0378">Hydrolase</keyword>
<keyword id="KW-0511">Multifunctional enzyme</keyword>
<keyword id="KW-0658">Purine biosynthesis</keyword>
<keyword id="KW-1185">Reference proteome</keyword>
<keyword id="KW-0808">Transferase</keyword>
<organism>
    <name type="scientific">Neisseria gonorrhoeae (strain ATCC 700825 / FA 1090)</name>
    <dbReference type="NCBI Taxonomy" id="242231"/>
    <lineage>
        <taxon>Bacteria</taxon>
        <taxon>Pseudomonadati</taxon>
        <taxon>Pseudomonadota</taxon>
        <taxon>Betaproteobacteria</taxon>
        <taxon>Neisseriales</taxon>
        <taxon>Neisseriaceae</taxon>
        <taxon>Neisseria</taxon>
    </lineage>
</organism>
<sequence length="526" mass="56688">MSVIKRALISLSDKAGAVEFAQNLHKLGVEILSTGGTAKLLAGAGVPVIEVADYTGFPEMLDGRVKTLHPKIHGGILGRRDLDEHVAKMEEHGIGNIDLVCVNLYPFAATIAKPGCTLEDAIENIDIGGPTMVRSAAKNWKHVAIVTDTADFPAIAAELEANNGALSDKTRFNLSRKAFSHTAQYDGMISNYLTSLSDGVLSGEPEIGEFPSRFNQSWIKVQDMRYGENPHQRAAFYRDIDPAAGSLSAYNQLQGKELSYNNIADADAAWEAVKSFDAPACVIVKHANPCGVAVAADTLTAYKLAYATDTTSAFGGIIAFNREVDGETVKQITDNQFMEVLMAPKFTAEALEIAAAKKNVRVLEVPLKAGANRFELKRVGGGLLVQTPDINRINRADLKVVSKRQPTEQEWNDLLFVWNVAKYVKSNAIVFGKGGQTYGIGAGQMSRVDSTRIAARKAQDAGLDLNGACAASDAFFPFRDGVDVIAEQGIKAIIHPAGSMRDQEVFDAADEHGIAMAVTGIRHFRH</sequence>